<sequence length="1195" mass="138674">MDKILEILKDFGIVELRPPQKKALERGLLDKNKNFLISIPTASGKTLIGEMALINHLLDGNKNPTNKKGIFIVPLKALASEKYEEFKSKYERYGLRIALSIGDYDEDEDLSKYHLIITTAEKLDSLWRHKIDWINDVSVVVVDEIHLINDETRGGTLEILLTKLKEFNVQIIGLSATIGNPDELAEWLNAELIVDDWRPVELKKGIYKNEAIEFINGEIREIKAVDNNDIYNLVVDCVKEGGCCLVFCNTKRNAVNEAKKLNLKKFLTEEEKIRLKEIAEEILSILEPPTEMCKTLAECILNGSAFHHAGLTYQHRKIVEDAFRKRLIKVICCTPTLCLNANTEILQESGFRKITELNKDEKVFALCGKEIKPVDGWKVHKTPQHEYNIVVKTVNGLEITTTPNHIFLVKENGSLKEKEAKDLKVGDYVATVDRIRVKEKDIDLSNGDLYFIGYFIGDGYTGVIEKNTLKATPDLAFNPKYPPNFDDSELHKKYFLKCRISKGVAHYIYSKKLRKIFNKLNMLTKDNKNIDAFCNLPLDKLAYLIAGLFDSDGYIYLNRKNIEFYSISEKLVEQLQFVLLRFGIHSSIRKKKTKTMVSPTNGKEYKCKDIYVLTIRDFMSIKRFYENIPLRHEEKRRKLEEIIKNKEIGQIPSEFVALRFTPIAKIWCDCGFSVDLTMFKPRTKRQRELNKKRVKLLFELLDGKKLITNYKEYYSKRKNPYFDFIVREKINGNNYYSLNEKGRVLMSLLNKHIKDKENLEEMYNFLVNLEKCPICGKPIHKEMRYSWKKECYDGDIYWDRIKEIKKIKVNDKYAYDIELPDDGSNSHYIVANGFIVHNSAGLNLPCRRAIVKDLTRFTNKGMRYIPIMEIQQCIGRAGRPGLDPYGEGIIVAKNDRDYLRAYQALTQKPEPIYSKLSNQAVLRTQLLGLIATGEIRDEYDLEWFIRNTFYAHQYGNLREVAKNINEVIRFLEENEFIIDFMPTELGKRVSELYIDPLSAKFIIDGLEEMENEEEIYYLYLISKTLEMMPNLRVYNSEELNLIDEMDSLGIKSFEIEDLEAFKTAKMLYDWINEVPEDEILKRYKIEPGILRYKVENAVWIMHALKEIAKLIGKSSDIPEKLEIRLEYGAKEDIIELLSIKYIGRVRARKLYNAGIRSIEDIINNPSKVASIIGEKIAKKILDELGVKFGQQKLSF</sequence>
<reference key="1">
    <citation type="journal article" date="1996" name="Science">
        <title>Complete genome sequence of the methanogenic archaeon, Methanococcus jannaschii.</title>
        <authorList>
            <person name="Bult C.J."/>
            <person name="White O."/>
            <person name="Olsen G.J."/>
            <person name="Zhou L."/>
            <person name="Fleischmann R.D."/>
            <person name="Sutton G.G."/>
            <person name="Blake J.A."/>
            <person name="FitzGerald L.M."/>
            <person name="Clayton R.A."/>
            <person name="Gocayne J.D."/>
            <person name="Kerlavage A.R."/>
            <person name="Dougherty B.A."/>
            <person name="Tomb J.-F."/>
            <person name="Adams M.D."/>
            <person name="Reich C.I."/>
            <person name="Overbeek R."/>
            <person name="Kirkness E.F."/>
            <person name="Weinstock K.G."/>
            <person name="Merrick J.M."/>
            <person name="Glodek A."/>
            <person name="Scott J.L."/>
            <person name="Geoghagen N.S.M."/>
            <person name="Weidman J.F."/>
            <person name="Fuhrmann J.L."/>
            <person name="Nguyen D."/>
            <person name="Utterback T.R."/>
            <person name="Kelley J.M."/>
            <person name="Peterson J.D."/>
            <person name="Sadow P.W."/>
            <person name="Hanna M.C."/>
            <person name="Cotton M.D."/>
            <person name="Roberts K.M."/>
            <person name="Hurst M.A."/>
            <person name="Kaine B.P."/>
            <person name="Borodovsky M."/>
            <person name="Klenk H.-P."/>
            <person name="Fraser C.M."/>
            <person name="Smith H.O."/>
            <person name="Woese C.R."/>
            <person name="Venter J.C."/>
        </authorList>
    </citation>
    <scope>NUCLEOTIDE SEQUENCE [LARGE SCALE GENOMIC DNA]</scope>
    <source>
        <strain>ATCC 43067 / DSM 2661 / JAL-1 / JCM 10045 / NBRC 100440</strain>
    </source>
</reference>
<keyword id="KW-0067">ATP-binding</keyword>
<keyword id="KW-0068">Autocatalytic cleavage</keyword>
<keyword id="KW-0227">DNA damage</keyword>
<keyword id="KW-0234">DNA repair</keyword>
<keyword id="KW-0238">DNA-binding</keyword>
<keyword id="KW-0255">Endonuclease</keyword>
<keyword id="KW-0347">Helicase</keyword>
<keyword id="KW-0378">Hydrolase</keyword>
<keyword id="KW-0404">Intron homing</keyword>
<keyword id="KW-0413">Isomerase</keyword>
<keyword id="KW-0540">Nuclease</keyword>
<keyword id="KW-0547">Nucleotide-binding</keyword>
<keyword id="KW-0651">Protein splicing</keyword>
<keyword id="KW-1185">Reference proteome</keyword>
<accession>Q58524</accession>
<feature type="chain" id="PRO_0000013299" description="ATP-dependent DNA helicase Hel308, 1st part" evidence="1">
    <location>
        <begin position="1"/>
        <end position="337"/>
    </location>
</feature>
<feature type="chain" id="PRO_0000013300" description="Endonuclease PI-MjaHel" evidence="1">
    <location>
        <begin position="338"/>
        <end position="838"/>
    </location>
</feature>
<feature type="chain" id="PRO_0000013301" description="ATP-dependent DNA helicase Hel308, 2nd part" evidence="1">
    <location>
        <begin position="839"/>
        <end position="1195"/>
    </location>
</feature>
<feature type="domain" description="Helicase ATP-binding" evidence="2">
    <location>
        <begin position="26"/>
        <end position="196"/>
    </location>
</feature>
<feature type="domain" description="DOD-type homing endonuclease">
    <location>
        <begin position="451"/>
        <end position="584"/>
    </location>
</feature>
<feature type="short sequence motif" description="DEAH box" evidence="2">
    <location>
        <begin position="143"/>
        <end position="146"/>
    </location>
</feature>
<feature type="binding site" evidence="2">
    <location>
        <position position="20"/>
    </location>
    <ligand>
        <name>ATP</name>
        <dbReference type="ChEBI" id="CHEBI:30616"/>
    </ligand>
</feature>
<feature type="binding site" evidence="2">
    <location>
        <begin position="39"/>
        <end position="46"/>
    </location>
    <ligand>
        <name>ATP</name>
        <dbReference type="ChEBI" id="CHEBI:30616"/>
    </ligand>
</feature>
<name>HELS_METJA</name>
<proteinExistence type="inferred from homology"/>
<gene>
    <name evidence="2" type="primary">hel308</name>
    <name type="ordered locus">MJ1124</name>
</gene>
<evidence type="ECO:0000255" key="1"/>
<evidence type="ECO:0000255" key="2">
    <source>
        <dbReference type="HAMAP-Rule" id="MF_00442"/>
    </source>
</evidence>
<evidence type="ECO:0000305" key="3"/>
<organism>
    <name type="scientific">Methanocaldococcus jannaschii (strain ATCC 43067 / DSM 2661 / JAL-1 / JCM 10045 / NBRC 100440)</name>
    <name type="common">Methanococcus jannaschii</name>
    <dbReference type="NCBI Taxonomy" id="243232"/>
    <lineage>
        <taxon>Archaea</taxon>
        <taxon>Methanobacteriati</taxon>
        <taxon>Methanobacteriota</taxon>
        <taxon>Methanomada group</taxon>
        <taxon>Methanococci</taxon>
        <taxon>Methanococcales</taxon>
        <taxon>Methanocaldococcaceae</taxon>
        <taxon>Methanocaldococcus</taxon>
    </lineage>
</organism>
<protein>
    <recommendedName>
        <fullName evidence="2">ATP-dependent DNA helicase Hel308</fullName>
        <ecNumber evidence="2">5.6.2.4</ecNumber>
    </recommendedName>
    <alternativeName>
        <fullName evidence="2">DNA 3'-5' helicase Hel308</fullName>
    </alternativeName>
    <component>
        <recommendedName>
            <fullName>Endonuclease PI-MjaHel</fullName>
            <ecNumber>3.1.-.-</ecNumber>
        </recommendedName>
        <alternativeName>
            <fullName>Mja Hel intein</fullName>
        </alternativeName>
        <alternativeName>
            <fullName>Mja Pep3 intein</fullName>
        </alternativeName>
    </component>
</protein>
<dbReference type="EC" id="5.6.2.4" evidence="2"/>
<dbReference type="EC" id="3.1.-.-"/>
<dbReference type="EMBL" id="L77117">
    <property type="protein sequence ID" value="AAB99126.1"/>
    <property type="molecule type" value="Genomic_DNA"/>
</dbReference>
<dbReference type="PIR" id="C64440">
    <property type="entry name" value="C64440"/>
</dbReference>
<dbReference type="RefSeq" id="WP_010870635.1">
    <property type="nucleotide sequence ID" value="NC_000909.1"/>
</dbReference>
<dbReference type="SMR" id="Q58524"/>
<dbReference type="FunCoup" id="Q58524">
    <property type="interactions" value="75"/>
</dbReference>
<dbReference type="STRING" id="243232.MJ_1124"/>
<dbReference type="PaxDb" id="243232-MJ_1124"/>
<dbReference type="EnsemblBacteria" id="AAB99126">
    <property type="protein sequence ID" value="AAB99126"/>
    <property type="gene ID" value="MJ_1124"/>
</dbReference>
<dbReference type="GeneID" id="1452020"/>
<dbReference type="KEGG" id="mja:MJ_1124"/>
<dbReference type="eggNOG" id="arCOG00553">
    <property type="taxonomic scope" value="Archaea"/>
</dbReference>
<dbReference type="eggNOG" id="arCOG03157">
    <property type="taxonomic scope" value="Archaea"/>
</dbReference>
<dbReference type="HOGENOM" id="CLU_279743_0_0_2"/>
<dbReference type="InParanoid" id="Q58524"/>
<dbReference type="OrthoDB" id="371946at2157"/>
<dbReference type="PhylomeDB" id="Q58524"/>
<dbReference type="Proteomes" id="UP000000805">
    <property type="component" value="Chromosome"/>
</dbReference>
<dbReference type="GO" id="GO:0043138">
    <property type="term" value="F:3'-5' DNA helicase activity"/>
    <property type="evidence" value="ECO:0007669"/>
    <property type="project" value="UniProtKB-UniRule"/>
</dbReference>
<dbReference type="GO" id="GO:0005524">
    <property type="term" value="F:ATP binding"/>
    <property type="evidence" value="ECO:0007669"/>
    <property type="project" value="UniProtKB-UniRule"/>
</dbReference>
<dbReference type="GO" id="GO:0016887">
    <property type="term" value="F:ATP hydrolysis activity"/>
    <property type="evidence" value="ECO:0007669"/>
    <property type="project" value="RHEA"/>
</dbReference>
<dbReference type="GO" id="GO:0003677">
    <property type="term" value="F:DNA binding"/>
    <property type="evidence" value="ECO:0007669"/>
    <property type="project" value="UniProtKB-UniRule"/>
</dbReference>
<dbReference type="GO" id="GO:0004519">
    <property type="term" value="F:endonuclease activity"/>
    <property type="evidence" value="ECO:0007669"/>
    <property type="project" value="UniProtKB-KW"/>
</dbReference>
<dbReference type="GO" id="GO:0006281">
    <property type="term" value="P:DNA repair"/>
    <property type="evidence" value="ECO:0007669"/>
    <property type="project" value="UniProtKB-UniRule"/>
</dbReference>
<dbReference type="GO" id="GO:0016539">
    <property type="term" value="P:intein-mediated protein splicing"/>
    <property type="evidence" value="ECO:0007669"/>
    <property type="project" value="InterPro"/>
</dbReference>
<dbReference type="GO" id="GO:0006314">
    <property type="term" value="P:intron homing"/>
    <property type="evidence" value="ECO:0007669"/>
    <property type="project" value="UniProtKB-KW"/>
</dbReference>
<dbReference type="CDD" id="cd18028">
    <property type="entry name" value="DEXHc_archSki2"/>
    <property type="match status" value="1"/>
</dbReference>
<dbReference type="CDD" id="cd00081">
    <property type="entry name" value="Hint"/>
    <property type="match status" value="1"/>
</dbReference>
<dbReference type="FunFam" id="3.10.28.10:FF:000019">
    <property type="entry name" value="Vitamin B12-dependent ribonucleotide reductase"/>
    <property type="match status" value="1"/>
</dbReference>
<dbReference type="Gene3D" id="1.10.3380.30">
    <property type="match status" value="1"/>
</dbReference>
<dbReference type="Gene3D" id="1.10.150.20">
    <property type="entry name" value="5' to 3' exonuclease, C-terminal subdomain"/>
    <property type="match status" value="1"/>
</dbReference>
<dbReference type="Gene3D" id="2.170.16.10">
    <property type="entry name" value="Hedgehog/Intein (Hint) domain"/>
    <property type="match status" value="2"/>
</dbReference>
<dbReference type="Gene3D" id="3.10.28.10">
    <property type="entry name" value="Homing endonucleases"/>
    <property type="match status" value="1"/>
</dbReference>
<dbReference type="Gene3D" id="3.40.50.300">
    <property type="entry name" value="P-loop containing nucleotide triphosphate hydrolases"/>
    <property type="match status" value="3"/>
</dbReference>
<dbReference type="HAMAP" id="MF_00442">
    <property type="entry name" value="Helicase_Hel308"/>
    <property type="match status" value="1"/>
</dbReference>
<dbReference type="InterPro" id="IPR011545">
    <property type="entry name" value="DEAD/DEAH_box_helicase_dom"/>
</dbReference>
<dbReference type="InterPro" id="IPR048772">
    <property type="entry name" value="Hel308-like_dom4"/>
</dbReference>
<dbReference type="InterPro" id="IPR050474">
    <property type="entry name" value="Hel308_SKI2-like"/>
</dbReference>
<dbReference type="InterPro" id="IPR014001">
    <property type="entry name" value="Helicase_ATP-bd"/>
</dbReference>
<dbReference type="InterPro" id="IPR022965">
    <property type="entry name" value="Helicase_Hel308"/>
</dbReference>
<dbReference type="InterPro" id="IPR003586">
    <property type="entry name" value="Hint_dom_C"/>
</dbReference>
<dbReference type="InterPro" id="IPR003587">
    <property type="entry name" value="Hint_dom_N"/>
</dbReference>
<dbReference type="InterPro" id="IPR036844">
    <property type="entry name" value="Hint_dom_sf"/>
</dbReference>
<dbReference type="InterPro" id="IPR027434">
    <property type="entry name" value="Homing_endonucl"/>
</dbReference>
<dbReference type="InterPro" id="IPR006142">
    <property type="entry name" value="INTEIN"/>
</dbReference>
<dbReference type="InterPro" id="IPR030934">
    <property type="entry name" value="Intein_C"/>
</dbReference>
<dbReference type="InterPro" id="IPR004042">
    <property type="entry name" value="Intein_endonuc_central"/>
</dbReference>
<dbReference type="InterPro" id="IPR006141">
    <property type="entry name" value="Intein_N"/>
</dbReference>
<dbReference type="InterPro" id="IPR004860">
    <property type="entry name" value="LAGLIDADG_dom"/>
</dbReference>
<dbReference type="InterPro" id="IPR027417">
    <property type="entry name" value="P-loop_NTPase"/>
</dbReference>
<dbReference type="InterPro" id="IPR036390">
    <property type="entry name" value="WH_DNA-bd_sf"/>
</dbReference>
<dbReference type="NCBIfam" id="TIGR01443">
    <property type="entry name" value="intein_Cterm"/>
    <property type="match status" value="1"/>
</dbReference>
<dbReference type="NCBIfam" id="TIGR01445">
    <property type="entry name" value="intein_Nterm"/>
    <property type="match status" value="1"/>
</dbReference>
<dbReference type="PANTHER" id="PTHR47961:SF10">
    <property type="entry name" value="ATP-DEPENDENT DNA HELICASE HEL308"/>
    <property type="match status" value="1"/>
</dbReference>
<dbReference type="PANTHER" id="PTHR47961">
    <property type="entry name" value="DNA POLYMERASE THETA, PUTATIVE (AFU_ORTHOLOGUE AFUA_1G05260)-RELATED"/>
    <property type="match status" value="1"/>
</dbReference>
<dbReference type="Pfam" id="PF00270">
    <property type="entry name" value="DEAD"/>
    <property type="match status" value="1"/>
</dbReference>
<dbReference type="Pfam" id="PF21280">
    <property type="entry name" value="Helicase_dom4_arc"/>
    <property type="match status" value="1"/>
</dbReference>
<dbReference type="Pfam" id="PF14520">
    <property type="entry name" value="HHH_5"/>
    <property type="match status" value="1"/>
</dbReference>
<dbReference type="Pfam" id="PF14890">
    <property type="entry name" value="Intein_splicing"/>
    <property type="match status" value="1"/>
</dbReference>
<dbReference type="Pfam" id="PF14528">
    <property type="entry name" value="LAGLIDADG_3"/>
    <property type="match status" value="1"/>
</dbReference>
<dbReference type="PRINTS" id="PR00379">
    <property type="entry name" value="INTEIN"/>
</dbReference>
<dbReference type="SMART" id="SM00487">
    <property type="entry name" value="DEXDc"/>
    <property type="match status" value="1"/>
</dbReference>
<dbReference type="SMART" id="SM00305">
    <property type="entry name" value="HintC"/>
    <property type="match status" value="1"/>
</dbReference>
<dbReference type="SMART" id="SM00306">
    <property type="entry name" value="HintN"/>
    <property type="match status" value="1"/>
</dbReference>
<dbReference type="SUPFAM" id="SSF51294">
    <property type="entry name" value="Hedgehog/intein (Hint) domain"/>
    <property type="match status" value="1"/>
</dbReference>
<dbReference type="SUPFAM" id="SSF55608">
    <property type="entry name" value="Homing endonucleases"/>
    <property type="match status" value="1"/>
</dbReference>
<dbReference type="SUPFAM" id="SSF52540">
    <property type="entry name" value="P-loop containing nucleoside triphosphate hydrolases"/>
    <property type="match status" value="3"/>
</dbReference>
<dbReference type="SUPFAM" id="SSF158702">
    <property type="entry name" value="Sec63 N-terminal domain-like"/>
    <property type="match status" value="1"/>
</dbReference>
<dbReference type="SUPFAM" id="SSF46785">
    <property type="entry name" value="Winged helix' DNA-binding domain"/>
    <property type="match status" value="1"/>
</dbReference>
<dbReference type="PROSITE" id="PS51192">
    <property type="entry name" value="HELICASE_ATP_BIND_1"/>
    <property type="match status" value="1"/>
</dbReference>
<dbReference type="PROSITE" id="PS50818">
    <property type="entry name" value="INTEIN_C_TER"/>
    <property type="match status" value="1"/>
</dbReference>
<dbReference type="PROSITE" id="PS50819">
    <property type="entry name" value="INTEIN_ENDONUCLEASE"/>
    <property type="match status" value="1"/>
</dbReference>
<dbReference type="PROSITE" id="PS50817">
    <property type="entry name" value="INTEIN_N_TER"/>
    <property type="match status" value="1"/>
</dbReference>
<comment type="function">
    <text evidence="2">DNA-dependent ATPase and 3'-5' DNA helicase that may be involved in repair of stalled replication forks.</text>
</comment>
<comment type="catalytic activity">
    <reaction evidence="2">
        <text>Couples ATP hydrolysis with the unwinding of duplex DNA by translocating in the 3'-5' direction.</text>
        <dbReference type="EC" id="5.6.2.4"/>
    </reaction>
</comment>
<comment type="catalytic activity">
    <reaction evidence="2">
        <text>ATP + H2O = ADP + phosphate + H(+)</text>
        <dbReference type="Rhea" id="RHEA:13065"/>
        <dbReference type="ChEBI" id="CHEBI:15377"/>
        <dbReference type="ChEBI" id="CHEBI:15378"/>
        <dbReference type="ChEBI" id="CHEBI:30616"/>
        <dbReference type="ChEBI" id="CHEBI:43474"/>
        <dbReference type="ChEBI" id="CHEBI:456216"/>
        <dbReference type="EC" id="5.6.2.4"/>
    </reaction>
</comment>
<comment type="subunit">
    <text evidence="2">Monomer.</text>
</comment>
<comment type="PTM">
    <text evidence="3">This protein undergoes a protein self splicing that involves a post-translational excision of the intervening region (intein) followed by peptide ligation.</text>
</comment>
<comment type="similarity">
    <text evidence="2">Belongs to the helicase family. Hel308 subfamily.</text>
</comment>